<keyword id="KW-1015">Disulfide bond</keyword>
<keyword id="KW-0528">Neurotoxin</keyword>
<keyword id="KW-0964">Secreted</keyword>
<keyword id="KW-0732">Signal</keyword>
<keyword id="KW-0800">Toxin</keyword>
<sequence length="124" mass="13301">MKVAVVLLVSLLAVTYALPEKRIFFGGIVDKVKDTFTKIFNKAKETFDKITDGFDVDFDEVVDKLIAQIHSTPTKAACKAACKKGAKLILKAAAPLASQVCGPACNAALAKLEKIADDINDDDD</sequence>
<dbReference type="EMBL" id="FJ959128">
    <property type="protein sequence ID" value="ADB93098.1"/>
    <property type="molecule type" value="Genomic_DNA"/>
</dbReference>
<dbReference type="SMR" id="D6C4I6"/>
<dbReference type="ConoServer" id="4014">
    <property type="toxin name" value="Cal14.12 precursor"/>
</dbReference>
<dbReference type="GO" id="GO:0005576">
    <property type="term" value="C:extracellular region"/>
    <property type="evidence" value="ECO:0007669"/>
    <property type="project" value="UniProtKB-SubCell"/>
</dbReference>
<dbReference type="GO" id="GO:0090729">
    <property type="term" value="F:toxin activity"/>
    <property type="evidence" value="ECO:0007669"/>
    <property type="project" value="UniProtKB-KW"/>
</dbReference>
<organism>
    <name type="scientific">Californiconus californicus</name>
    <name type="common">California cone</name>
    <name type="synonym">Conus californicus</name>
    <dbReference type="NCBI Taxonomy" id="1736779"/>
    <lineage>
        <taxon>Eukaryota</taxon>
        <taxon>Metazoa</taxon>
        <taxon>Spiralia</taxon>
        <taxon>Lophotrochozoa</taxon>
        <taxon>Mollusca</taxon>
        <taxon>Gastropoda</taxon>
        <taxon>Caenogastropoda</taxon>
        <taxon>Neogastropoda</taxon>
        <taxon>Conoidea</taxon>
        <taxon>Conidae</taxon>
        <taxon>Californiconus</taxon>
    </lineage>
</organism>
<proteinExistence type="inferred from homology"/>
<reference key="1">
    <citation type="journal article" date="2010" name="Mol. Phylogenet. Evol.">
        <title>Evolution of Conus peptide toxins: analysis of Conus californicus Reeve, 1844.</title>
        <authorList>
            <person name="Biggs J.S."/>
            <person name="Watkins M."/>
            <person name="Puillandre N."/>
            <person name="Ownby J.P."/>
            <person name="Lopez-Vera E."/>
            <person name="Christensen S."/>
            <person name="Moreno K.J."/>
            <person name="Bernaldez J."/>
            <person name="Licea-Navarro A."/>
            <person name="Corneli P.S."/>
            <person name="Olivera B.M."/>
        </authorList>
    </citation>
    <scope>NUCLEOTIDE SEQUENCE [GENOMIC DNA]</scope>
</reference>
<name>CUEC_CONCL</name>
<protein>
    <recommendedName>
        <fullName evidence="3">Conotoxin Cl14.12</fullName>
    </recommendedName>
</protein>
<evidence type="ECO:0000250" key="1"/>
<evidence type="ECO:0000255" key="2"/>
<evidence type="ECO:0000303" key="3">
    <source>
    </source>
</evidence>
<evidence type="ECO:0000305" key="4"/>
<evidence type="ECO:0000305" key="5">
    <source>
    </source>
</evidence>
<feature type="signal peptide" evidence="2">
    <location>
        <begin position="1"/>
        <end position="17"/>
    </location>
</feature>
<feature type="propeptide" id="PRO_0000415035" evidence="1">
    <location>
        <begin position="18"/>
        <end position="74"/>
    </location>
</feature>
<feature type="peptide" id="PRO_0000415036" description="Conotoxin Cl14.12" evidence="5">
    <location>
        <begin position="76"/>
        <end position="124"/>
    </location>
</feature>
<comment type="subcellular location">
    <subcellularLocation>
        <location evidence="4">Secreted</location>
    </subcellularLocation>
</comment>
<comment type="tissue specificity">
    <text evidence="4">Expressed by the venom duct.</text>
</comment>
<comment type="domain">
    <text evidence="4">The cysteine framework is XIV (C-C-C-C).</text>
</comment>
<comment type="PTM">
    <text evidence="4">Contains 2 disulfide bond.</text>
</comment>
<accession>D6C4I6</accession>